<dbReference type="EMBL" id="AC011560">
    <property type="protein sequence ID" value="AAG51388.1"/>
    <property type="status" value="ALT_SEQ"/>
    <property type="molecule type" value="Genomic_DNA"/>
</dbReference>
<dbReference type="EMBL" id="AC013428">
    <property type="protein sequence ID" value="AAF76351.1"/>
    <property type="status" value="ALT_SEQ"/>
    <property type="molecule type" value="Genomic_DNA"/>
</dbReference>
<dbReference type="EMBL" id="CP002686">
    <property type="protein sequence ID" value="AEE74917.1"/>
    <property type="molecule type" value="Genomic_DNA"/>
</dbReference>
<dbReference type="EMBL" id="AY051003">
    <property type="protein sequence ID" value="AAK93680.1"/>
    <property type="molecule type" value="mRNA"/>
</dbReference>
<dbReference type="EMBL" id="AY079345">
    <property type="protein sequence ID" value="AAL85076.1"/>
    <property type="molecule type" value="mRNA"/>
</dbReference>
<dbReference type="EMBL" id="AY087802">
    <property type="protein sequence ID" value="AAM65338.1"/>
    <property type="molecule type" value="mRNA"/>
</dbReference>
<dbReference type="RefSeq" id="NP_566376.1">
    <property type="nucleotide sequence ID" value="NM_111885.4"/>
</dbReference>
<dbReference type="SMR" id="Q949N0"/>
<dbReference type="FunCoup" id="Q949N0">
    <property type="interactions" value="910"/>
</dbReference>
<dbReference type="STRING" id="3702.Q949N0"/>
<dbReference type="GlyGen" id="Q949N0">
    <property type="glycosylation" value="1 site"/>
</dbReference>
<dbReference type="iPTMnet" id="Q949N0"/>
<dbReference type="PaxDb" id="3702-AT3G10500.1"/>
<dbReference type="ProteomicsDB" id="251225"/>
<dbReference type="DNASU" id="820214"/>
<dbReference type="EnsemblPlants" id="AT3G10500.1">
    <property type="protein sequence ID" value="AT3G10500.1"/>
    <property type="gene ID" value="AT3G10500"/>
</dbReference>
<dbReference type="GeneID" id="820214"/>
<dbReference type="Gramene" id="AT3G10500.1">
    <property type="protein sequence ID" value="AT3G10500.1"/>
    <property type="gene ID" value="AT3G10500"/>
</dbReference>
<dbReference type="KEGG" id="ath:AT3G10500"/>
<dbReference type="Araport" id="AT3G10500"/>
<dbReference type="TAIR" id="AT3G10500">
    <property type="gene designation" value="NAC053"/>
</dbReference>
<dbReference type="eggNOG" id="ENOG502QTKI">
    <property type="taxonomic scope" value="Eukaryota"/>
</dbReference>
<dbReference type="HOGENOM" id="CLU_032008_1_0_1"/>
<dbReference type="InParanoid" id="Q949N0"/>
<dbReference type="PhylomeDB" id="Q949N0"/>
<dbReference type="PRO" id="PR:Q949N0"/>
<dbReference type="Proteomes" id="UP000006548">
    <property type="component" value="Chromosome 3"/>
</dbReference>
<dbReference type="ExpressionAtlas" id="Q949N0">
    <property type="expression patterns" value="baseline and differential"/>
</dbReference>
<dbReference type="GO" id="GO:0005737">
    <property type="term" value="C:cytoplasm"/>
    <property type="evidence" value="ECO:0000314"/>
    <property type="project" value="TAIR"/>
</dbReference>
<dbReference type="GO" id="GO:0005789">
    <property type="term" value="C:endoplasmic reticulum membrane"/>
    <property type="evidence" value="ECO:0007669"/>
    <property type="project" value="UniProtKB-SubCell"/>
</dbReference>
<dbReference type="GO" id="GO:0005634">
    <property type="term" value="C:nucleus"/>
    <property type="evidence" value="ECO:0000314"/>
    <property type="project" value="TAIR"/>
</dbReference>
<dbReference type="GO" id="GO:0003700">
    <property type="term" value="F:DNA-binding transcription factor activity"/>
    <property type="evidence" value="ECO:0000314"/>
    <property type="project" value="TAIR"/>
</dbReference>
<dbReference type="GO" id="GO:0000976">
    <property type="term" value="F:transcription cis-regulatory region binding"/>
    <property type="evidence" value="ECO:0000353"/>
    <property type="project" value="TAIR"/>
</dbReference>
<dbReference type="GO" id="GO:0009819">
    <property type="term" value="P:drought recovery"/>
    <property type="evidence" value="ECO:0000315"/>
    <property type="project" value="TAIR"/>
</dbReference>
<dbReference type="GO" id="GO:0010150">
    <property type="term" value="P:leaf senescence"/>
    <property type="evidence" value="ECO:0000315"/>
    <property type="project" value="TAIR"/>
</dbReference>
<dbReference type="GO" id="GO:0045893">
    <property type="term" value="P:positive regulation of DNA-templated transcription"/>
    <property type="evidence" value="ECO:0000314"/>
    <property type="project" value="TAIR"/>
</dbReference>
<dbReference type="GO" id="GO:2000377">
    <property type="term" value="P:regulation of reactive oxygen species metabolic process"/>
    <property type="evidence" value="ECO:0000315"/>
    <property type="project" value="TAIR"/>
</dbReference>
<dbReference type="FunFam" id="2.170.150.80:FF:000002">
    <property type="entry name" value="Nac domain-containing protein 86"/>
    <property type="match status" value="1"/>
</dbReference>
<dbReference type="Gene3D" id="2.170.150.80">
    <property type="entry name" value="NAC domain"/>
    <property type="match status" value="1"/>
</dbReference>
<dbReference type="InterPro" id="IPR003441">
    <property type="entry name" value="NAC-dom"/>
</dbReference>
<dbReference type="InterPro" id="IPR036093">
    <property type="entry name" value="NAC_dom_sf"/>
</dbReference>
<dbReference type="PANTHER" id="PTHR31744:SF210">
    <property type="entry name" value="NAC DOMAIN-CONTAINING PROTEIN 86-LIKE"/>
    <property type="match status" value="1"/>
</dbReference>
<dbReference type="PANTHER" id="PTHR31744">
    <property type="entry name" value="PROTEIN CUP-SHAPED COTYLEDON 2-RELATED"/>
    <property type="match status" value="1"/>
</dbReference>
<dbReference type="Pfam" id="PF02365">
    <property type="entry name" value="NAM"/>
    <property type="match status" value="1"/>
</dbReference>
<dbReference type="SUPFAM" id="SSF101941">
    <property type="entry name" value="NAC domain"/>
    <property type="match status" value="1"/>
</dbReference>
<dbReference type="PROSITE" id="PS51005">
    <property type="entry name" value="NAC"/>
    <property type="match status" value="1"/>
</dbReference>
<reference key="1">
    <citation type="journal article" date="2000" name="Nature">
        <title>Sequence and analysis of chromosome 3 of the plant Arabidopsis thaliana.</title>
        <authorList>
            <person name="Salanoubat M."/>
            <person name="Lemcke K."/>
            <person name="Rieger M."/>
            <person name="Ansorge W."/>
            <person name="Unseld M."/>
            <person name="Fartmann B."/>
            <person name="Valle G."/>
            <person name="Bloecker H."/>
            <person name="Perez-Alonso M."/>
            <person name="Obermaier B."/>
            <person name="Delseny M."/>
            <person name="Boutry M."/>
            <person name="Grivell L.A."/>
            <person name="Mache R."/>
            <person name="Puigdomenech P."/>
            <person name="De Simone V."/>
            <person name="Choisne N."/>
            <person name="Artiguenave F."/>
            <person name="Robert C."/>
            <person name="Brottier P."/>
            <person name="Wincker P."/>
            <person name="Cattolico L."/>
            <person name="Weissenbach J."/>
            <person name="Saurin W."/>
            <person name="Quetier F."/>
            <person name="Schaefer M."/>
            <person name="Mueller-Auer S."/>
            <person name="Gabel C."/>
            <person name="Fuchs M."/>
            <person name="Benes V."/>
            <person name="Wurmbach E."/>
            <person name="Drzonek H."/>
            <person name="Erfle H."/>
            <person name="Jordan N."/>
            <person name="Bangert S."/>
            <person name="Wiedelmann R."/>
            <person name="Kranz H."/>
            <person name="Voss H."/>
            <person name="Holland R."/>
            <person name="Brandt P."/>
            <person name="Nyakatura G."/>
            <person name="Vezzi A."/>
            <person name="D'Angelo M."/>
            <person name="Pallavicini A."/>
            <person name="Toppo S."/>
            <person name="Simionati B."/>
            <person name="Conrad A."/>
            <person name="Hornischer K."/>
            <person name="Kauer G."/>
            <person name="Loehnert T.-H."/>
            <person name="Nordsiek G."/>
            <person name="Reichelt J."/>
            <person name="Scharfe M."/>
            <person name="Schoen O."/>
            <person name="Bargues M."/>
            <person name="Terol J."/>
            <person name="Climent J."/>
            <person name="Navarro P."/>
            <person name="Collado C."/>
            <person name="Perez-Perez A."/>
            <person name="Ottenwaelder B."/>
            <person name="Duchemin D."/>
            <person name="Cooke R."/>
            <person name="Laudie M."/>
            <person name="Berger-Llauro C."/>
            <person name="Purnelle B."/>
            <person name="Masuy D."/>
            <person name="de Haan M."/>
            <person name="Maarse A.C."/>
            <person name="Alcaraz J.-P."/>
            <person name="Cottet A."/>
            <person name="Casacuberta E."/>
            <person name="Monfort A."/>
            <person name="Argiriou A."/>
            <person name="Flores M."/>
            <person name="Liguori R."/>
            <person name="Vitale D."/>
            <person name="Mannhaupt G."/>
            <person name="Haase D."/>
            <person name="Schoof H."/>
            <person name="Rudd S."/>
            <person name="Zaccaria P."/>
            <person name="Mewes H.-W."/>
            <person name="Mayer K.F.X."/>
            <person name="Kaul S."/>
            <person name="Town C.D."/>
            <person name="Koo H.L."/>
            <person name="Tallon L.J."/>
            <person name="Jenkins J."/>
            <person name="Rooney T."/>
            <person name="Rizzo M."/>
            <person name="Walts A."/>
            <person name="Utterback T."/>
            <person name="Fujii C.Y."/>
            <person name="Shea T.P."/>
            <person name="Creasy T.H."/>
            <person name="Haas B."/>
            <person name="Maiti R."/>
            <person name="Wu D."/>
            <person name="Peterson J."/>
            <person name="Van Aken S."/>
            <person name="Pai G."/>
            <person name="Militscher J."/>
            <person name="Sellers P."/>
            <person name="Gill J.E."/>
            <person name="Feldblyum T.V."/>
            <person name="Preuss D."/>
            <person name="Lin X."/>
            <person name="Nierman W.C."/>
            <person name="Salzberg S.L."/>
            <person name="White O."/>
            <person name="Venter J.C."/>
            <person name="Fraser C.M."/>
            <person name="Kaneko T."/>
            <person name="Nakamura Y."/>
            <person name="Sato S."/>
            <person name="Kato T."/>
            <person name="Asamizu E."/>
            <person name="Sasamoto S."/>
            <person name="Kimura T."/>
            <person name="Idesawa K."/>
            <person name="Kawashima K."/>
            <person name="Kishida Y."/>
            <person name="Kiyokawa C."/>
            <person name="Kohara M."/>
            <person name="Matsumoto M."/>
            <person name="Matsuno A."/>
            <person name="Muraki A."/>
            <person name="Nakayama S."/>
            <person name="Nakazaki N."/>
            <person name="Shinpo S."/>
            <person name="Takeuchi C."/>
            <person name="Wada T."/>
            <person name="Watanabe A."/>
            <person name="Yamada M."/>
            <person name="Yasuda M."/>
            <person name="Tabata S."/>
        </authorList>
    </citation>
    <scope>NUCLEOTIDE SEQUENCE [LARGE SCALE GENOMIC DNA]</scope>
    <source>
        <strain>cv. Columbia</strain>
    </source>
</reference>
<reference key="2">
    <citation type="journal article" date="2017" name="Plant J.">
        <title>Araport11: a complete reannotation of the Arabidopsis thaliana reference genome.</title>
        <authorList>
            <person name="Cheng C.Y."/>
            <person name="Krishnakumar V."/>
            <person name="Chan A.P."/>
            <person name="Thibaud-Nissen F."/>
            <person name="Schobel S."/>
            <person name="Town C.D."/>
        </authorList>
    </citation>
    <scope>GENOME REANNOTATION</scope>
    <source>
        <strain>cv. Columbia</strain>
    </source>
</reference>
<reference key="3">
    <citation type="journal article" date="2003" name="Science">
        <title>Empirical analysis of transcriptional activity in the Arabidopsis genome.</title>
        <authorList>
            <person name="Yamada K."/>
            <person name="Lim J."/>
            <person name="Dale J.M."/>
            <person name="Chen H."/>
            <person name="Shinn P."/>
            <person name="Palm C.J."/>
            <person name="Southwick A.M."/>
            <person name="Wu H.C."/>
            <person name="Kim C.J."/>
            <person name="Nguyen M."/>
            <person name="Pham P.K."/>
            <person name="Cheuk R.F."/>
            <person name="Karlin-Newmann G."/>
            <person name="Liu S.X."/>
            <person name="Lam B."/>
            <person name="Sakano H."/>
            <person name="Wu T."/>
            <person name="Yu G."/>
            <person name="Miranda M."/>
            <person name="Quach H.L."/>
            <person name="Tripp M."/>
            <person name="Chang C.H."/>
            <person name="Lee J.M."/>
            <person name="Toriumi M.J."/>
            <person name="Chan M.M."/>
            <person name="Tang C.C."/>
            <person name="Onodera C.S."/>
            <person name="Deng J.M."/>
            <person name="Akiyama K."/>
            <person name="Ansari Y."/>
            <person name="Arakawa T."/>
            <person name="Banh J."/>
            <person name="Banno F."/>
            <person name="Bowser L."/>
            <person name="Brooks S.Y."/>
            <person name="Carninci P."/>
            <person name="Chao Q."/>
            <person name="Choy N."/>
            <person name="Enju A."/>
            <person name="Goldsmith A.D."/>
            <person name="Gurjal M."/>
            <person name="Hansen N.F."/>
            <person name="Hayashizaki Y."/>
            <person name="Johnson-Hopson C."/>
            <person name="Hsuan V.W."/>
            <person name="Iida K."/>
            <person name="Karnes M."/>
            <person name="Khan S."/>
            <person name="Koesema E."/>
            <person name="Ishida J."/>
            <person name="Jiang P.X."/>
            <person name="Jones T."/>
            <person name="Kawai J."/>
            <person name="Kamiya A."/>
            <person name="Meyers C."/>
            <person name="Nakajima M."/>
            <person name="Narusaka M."/>
            <person name="Seki M."/>
            <person name="Sakurai T."/>
            <person name="Satou M."/>
            <person name="Tamse R."/>
            <person name="Vaysberg M."/>
            <person name="Wallender E.K."/>
            <person name="Wong C."/>
            <person name="Yamamura Y."/>
            <person name="Yuan S."/>
            <person name="Shinozaki K."/>
            <person name="Davis R.W."/>
            <person name="Theologis A."/>
            <person name="Ecker J.R."/>
        </authorList>
    </citation>
    <scope>NUCLEOTIDE SEQUENCE [LARGE SCALE MRNA]</scope>
    <source>
        <strain>cv. Columbia</strain>
    </source>
</reference>
<reference key="4">
    <citation type="submission" date="2002-03" db="EMBL/GenBank/DDBJ databases">
        <title>Full-length cDNA from Arabidopsis thaliana.</title>
        <authorList>
            <person name="Brover V.V."/>
            <person name="Troukhan M.E."/>
            <person name="Alexandrov N.A."/>
            <person name="Lu Y.-P."/>
            <person name="Flavell R.B."/>
            <person name="Feldmann K.A."/>
        </authorList>
    </citation>
    <scope>NUCLEOTIDE SEQUENCE [LARGE SCALE MRNA]</scope>
</reference>
<reference key="5">
    <citation type="journal article" date="2003" name="DNA Res.">
        <title>Comprehensive analysis of NAC family genes in Oryza sativa and Arabidopsis thaliana.</title>
        <authorList>
            <person name="Ooka H."/>
            <person name="Satoh K."/>
            <person name="Doi K."/>
            <person name="Nagata T."/>
            <person name="Otomo Y."/>
            <person name="Murakami K."/>
            <person name="Matsubara K."/>
            <person name="Osato N."/>
            <person name="Kawai J."/>
            <person name="Carninci P."/>
            <person name="Hayashizaki Y."/>
            <person name="Suzuki K."/>
            <person name="Kojima K."/>
            <person name="Takahara Y."/>
            <person name="Yamamoto K."/>
            <person name="Kikuchi S."/>
        </authorList>
    </citation>
    <scope>GENE FAMILY</scope>
    <scope>NOMENCLATURE</scope>
</reference>
<reference key="6">
    <citation type="journal article" date="2010" name="Plant Sci.">
        <title>Probing protein structural requirements for activation of membrane-bound NAC transcription factors in Arabidopsis and rice.</title>
        <authorList>
            <person name="Kim S.G."/>
            <person name="Lee S."/>
            <person name="Ryu J."/>
            <person name="Park C.M."/>
        </authorList>
    </citation>
    <scope>SUBCELLULAR LOCATION</scope>
</reference>
<reference key="7">
    <citation type="journal article" date="2007" name="Nucleic Acids Res.">
        <title>Exploring membrane-associated NAC transcription factors in Arabidopsis: implications for membrane biology in genome regulation.</title>
        <authorList>
            <person name="Kim S.Y."/>
            <person name="Kim S.G."/>
            <person name="Kim Y.S."/>
            <person name="Seo P.J."/>
            <person name="Bae M."/>
            <person name="Yoon H.K."/>
            <person name="Park C.M."/>
        </authorList>
    </citation>
    <scope>GENE FAMILY</scope>
    <scope>NOMENCLATURE</scope>
    <scope>TISSUE SPECIFICITY</scope>
    <scope>INDUCTION</scope>
</reference>
<reference key="8">
    <citation type="journal article" date="2012" name="Plant J.">
        <title>A NAC transcription factor NTL4 promotes reactive oxygen species production during drought-induced leaf senescence in Arabidopsis.</title>
        <authorList>
            <person name="Lee S."/>
            <person name="Seo P.J."/>
            <person name="Lee H.J."/>
            <person name="Park C.M."/>
        </authorList>
    </citation>
    <scope>FUNCTION</scope>
    <scope>INDUCTION BY ABSCISIC ACID</scope>
    <scope>DISRUPTION PHENOTYPE</scope>
</reference>
<reference key="9">
    <citation type="journal article" date="2014" name="J. Exp. Bot.">
        <title>The NAC-like gene ANTHER INDEHISCENCE FACTOR acts as a repressor that controls anther dehiscence by regulating genes in the jasmonate biosynthesis pathway in Arabidopsis.</title>
        <authorList>
            <person name="Shih C.F."/>
            <person name="Hsu W.H."/>
            <person name="Peng Y.J."/>
            <person name="Yang C.H."/>
        </authorList>
    </citation>
    <scope>FUNCTION</scope>
    <scope>SUBCELLULAR LOCATION</scope>
    <scope>DEVELOPMENTAL STAGE</scope>
</reference>
<reference key="10">
    <citation type="journal article" date="2014" name="Plant Sci.">
        <title>The Arabidopsis NAC transcription factor NTL4 participates in a positive feedback loop that induces programmed cell death under heat stress conditions.</title>
        <authorList>
            <person name="Lee S."/>
            <person name="Lee H.J."/>
            <person name="Huh S.U."/>
            <person name="Paek K.H."/>
            <person name="Ha J.H."/>
            <person name="Park C.M."/>
        </authorList>
    </citation>
    <scope>FUNCTION</scope>
    <scope>SUBCELLULAR LOCATION</scope>
    <scope>INDUCTION</scope>
    <scope>DISRUPTION PHENOTYPE</scope>
</reference>
<accession>Q949N0</accession>
<accession>Q8LAH6</accession>
<accession>Q9SQY1</accession>
<sequence>MGRGSVTSLAPGFRFHPTDEELVRYYLKRKICNKPFKFDAISVTDVYKSEPWDLPDKSRLKSRDLEWYFFSMLDKKYRNGSKTNRATEMGYWKTTGKDREILNGSKVVGMKKTLVYHKGRAPRGERTNWVMHEYRLVDQDLDKTGVHQDAFVLCRIFQKSGSGPKNGEQYGAPFVEEEWEEEDDMTFVPDQEDLGSEDHVYVHMDDIDQKSENFVVYDAIPIPLNFIHGESSNNVETNYSDSINYIQQTGNYMDSGGYFEQPAESYEKDQKPIIRDRDGSLQNEGIGCGVQDKHSETLQSSDNIFGTDTSCYNDFPVESNYLIGEAFLDPNSNLLENDGLYLETNDLSSTQQDGFDFEDYLTFFDETFDPSQLMGNEDVFFDQEELFQEVETKELEKEETSRSKHVVEEKEKDEASCSKQVDADATEFEPDYKYPLLKKASHMLGAIPAPLANASEFPTKDAAIRLHAAQSSGSVHVTAGMITISDSNMGWSYGKNENLDLILSLGLVQGNTAPEKSGNSSAWAMLIFMCFWVLLLSVSFKVSILVSSR</sequence>
<gene>
    <name evidence="16" type="primary">NAC053</name>
    <name evidence="11" type="synonym">AIF</name>
    <name evidence="10" type="synonym">NTL4</name>
    <name evidence="13" type="ordered locus">At3g10500</name>
    <name evidence="15" type="ORF">F13M14.22</name>
    <name evidence="14" type="ORF">F18K10.7</name>
</gene>
<organism>
    <name type="scientific">Arabidopsis thaliana</name>
    <name type="common">Mouse-ear cress</name>
    <dbReference type="NCBI Taxonomy" id="3702"/>
    <lineage>
        <taxon>Eukaryota</taxon>
        <taxon>Viridiplantae</taxon>
        <taxon>Streptophyta</taxon>
        <taxon>Embryophyta</taxon>
        <taxon>Tracheophyta</taxon>
        <taxon>Spermatophyta</taxon>
        <taxon>Magnoliopsida</taxon>
        <taxon>eudicotyledons</taxon>
        <taxon>Gunneridae</taxon>
        <taxon>Pentapetalae</taxon>
        <taxon>rosids</taxon>
        <taxon>malvids</taxon>
        <taxon>Brassicales</taxon>
        <taxon>Brassicaceae</taxon>
        <taxon>Camelineae</taxon>
        <taxon>Arabidopsis</taxon>
    </lineage>
</organism>
<evidence type="ECO:0000255" key="1"/>
<evidence type="ECO:0000255" key="2">
    <source>
        <dbReference type="PROSITE-ProRule" id="PRU00353"/>
    </source>
</evidence>
<evidence type="ECO:0000256" key="3">
    <source>
        <dbReference type="SAM" id="MobiDB-lite"/>
    </source>
</evidence>
<evidence type="ECO:0000269" key="4">
    <source>
    </source>
</evidence>
<evidence type="ECO:0000269" key="5">
    <source>
    </source>
</evidence>
<evidence type="ECO:0000269" key="6">
    <source>
    </source>
</evidence>
<evidence type="ECO:0000269" key="7">
    <source>
    </source>
</evidence>
<evidence type="ECO:0000269" key="8">
    <source ref="6"/>
</evidence>
<evidence type="ECO:0000303" key="9">
    <source>
    </source>
</evidence>
<evidence type="ECO:0000303" key="10">
    <source>
    </source>
</evidence>
<evidence type="ECO:0000303" key="11">
    <source>
    </source>
</evidence>
<evidence type="ECO:0000305" key="12"/>
<evidence type="ECO:0000312" key="13">
    <source>
        <dbReference type="Araport" id="AT3G10500"/>
    </source>
</evidence>
<evidence type="ECO:0000312" key="14">
    <source>
        <dbReference type="EMBL" id="AAF76351.1"/>
    </source>
</evidence>
<evidence type="ECO:0000312" key="15">
    <source>
        <dbReference type="EMBL" id="AAG51388.1"/>
    </source>
</evidence>
<evidence type="ECO:0000312" key="16">
    <source>
        <dbReference type="EMBL" id="AEE74917.1"/>
    </source>
</evidence>
<protein>
    <recommendedName>
        <fullName evidence="9">NAC domain-containing protein 53</fullName>
        <shortName evidence="9">ANAC053</shortName>
    </recommendedName>
    <alternativeName>
        <fullName evidence="11">Protein ANTHER INDEHISCENCE FACTOR</fullName>
    </alternativeName>
    <alternativeName>
        <fullName evidence="10">Protein NTM1-like 4</fullName>
    </alternativeName>
</protein>
<feature type="chain" id="PRO_0000432444" description="NAC domain-containing protein 53">
    <location>
        <begin position="1"/>
        <end position="549"/>
    </location>
</feature>
<feature type="transmembrane region" description="Helical" evidence="1">
    <location>
        <begin position="526"/>
        <end position="546"/>
    </location>
</feature>
<feature type="domain" description="NAC" evidence="2">
    <location>
        <begin position="9"/>
        <end position="159"/>
    </location>
</feature>
<feature type="DNA-binding region" evidence="2">
    <location>
        <begin position="108"/>
        <end position="165"/>
    </location>
</feature>
<feature type="region of interest" description="Disordered" evidence="3">
    <location>
        <begin position="395"/>
        <end position="418"/>
    </location>
</feature>
<feature type="compositionally biased region" description="Basic and acidic residues" evidence="3">
    <location>
        <begin position="395"/>
        <end position="416"/>
    </location>
</feature>
<feature type="sequence conflict" description="In Ref. 4; AAM65338." evidence="12" ref="4">
    <original>D</original>
    <variation>N</variation>
    <location>
        <position position="74"/>
    </location>
</feature>
<feature type="sequence conflict" description="In Ref. 4; AAM65338." evidence="12" ref="4">
    <original>D</original>
    <variation>H</variation>
    <location>
        <position position="276"/>
    </location>
</feature>
<feature type="sequence conflict" description="In Ref. 4; AAM65338." evidence="12" ref="4">
    <original>T</original>
    <variation>I</variation>
    <location>
        <position position="297"/>
    </location>
</feature>
<comment type="function">
    <text evidence="5 6 7 8">Transcriptional activator activated by proteolytic cleavage through regulated intramembrane proteolysis (RIP) (PubMed:24323506, PubMed:25219309, Ref.6). Promotes reactive oxygen species (ROS) production during drought-induced leaf senescence. In response to abscisic acid (ABA)-mediated drought stress signals, binds directly to the promoters of RBOHC and RBOHE genes, encoding ROS biosynthetic enzymes, resulting in ROS accumulation and triggering leaf senescence via programmed cell death (PCD). ROS-induced leaf senescence sustains plant survival under drought conditions (PubMed:22313226). Involved in heat stress response. Modulates PCD through a ROS-mediated positive feedback control under heat stress conditions. This may provide an adaptation strategy for plant survival under extreme heat stress conditions (PubMed:25219309). Acts as a repressor in preventing anther dehiscence during stamen development by suppressing genes that participate in jasmonic acid (JA) biosynthesis, such as DAD1, AOS, AOC3, OPR3 and 4CLL5/OPCL1 (PubMed:24323506).</text>
</comment>
<comment type="subcellular location">
    <subcellularLocation>
        <location evidence="6">Endoplasmic reticulum membrane</location>
        <topology evidence="1">Single-pass membrane protein</topology>
    </subcellularLocation>
    <subcellularLocation>
        <location evidence="2 6 7 8">Nucleus</location>
    </subcellularLocation>
    <text evidence="6 7 8">Localized primarily in plasma membrane or endoplasmic reticulum membrane as dormant form and, upon abiotic stress, is processed into a transcriptionally active and nuclear form after a proteolytic cleavage through regulated intramembrane proteolysis (RIP).</text>
</comment>
<comment type="tissue specificity">
    <text evidence="4">Expressed in roots, rosette leaves, cauline leaves, shoot apex and stems.</text>
</comment>
<comment type="developmental stage">
    <text evidence="6">Expressed in the anthers and the upper parts of the stamen filaments after stage 7 to 9 of flower budding. In stage 10 flower buds, expressed in the anthers and pollen grains. Weakly expressed in mature flowers at stage 12.</text>
</comment>
<comment type="induction">
    <text evidence="4 5 7">By abscisic acid (ABA) (PubMed:22313226, PubMed:25219309). Induced by heat shock (PubMed:25219309). Induced by cold, drought stress and methyl methanesulfonate (MMS) treatment (PubMed:17158162).</text>
</comment>
<comment type="domain">
    <text evidence="2">The NAC domain includes a DNA binding domain and a dimerization domain.</text>
</comment>
<comment type="disruption phenotype">
    <text evidence="5 7">Delayed leaf senescence and enhanced drought resistance (PubMed:22313226). Enhanced heat resistance (PubMed:25219309).</text>
</comment>
<comment type="sequence caution" evidence="12">
    <conflict type="erroneous gene model prediction">
        <sequence resource="EMBL-CDS" id="AAF76351"/>
    </conflict>
</comment>
<comment type="sequence caution" evidence="12">
    <conflict type="erroneous gene model prediction">
        <sequence resource="EMBL-CDS" id="AAG51388"/>
    </conflict>
</comment>
<proteinExistence type="evidence at transcript level"/>
<keyword id="KW-0010">Activator</keyword>
<keyword id="KW-0238">DNA-binding</keyword>
<keyword id="KW-0256">Endoplasmic reticulum</keyword>
<keyword id="KW-0472">Membrane</keyword>
<keyword id="KW-0539">Nucleus</keyword>
<keyword id="KW-1185">Reference proteome</keyword>
<keyword id="KW-0678">Repressor</keyword>
<keyword id="KW-0346">Stress response</keyword>
<keyword id="KW-0804">Transcription</keyword>
<keyword id="KW-0805">Transcription regulation</keyword>
<keyword id="KW-0812">Transmembrane</keyword>
<keyword id="KW-1133">Transmembrane helix</keyword>
<name>NAC53_ARATH</name>